<accession>P06290</accession>
<keyword id="KW-0066">ATP synthesis</keyword>
<keyword id="KW-0067">ATP-binding</keyword>
<keyword id="KW-0138">CF(0)</keyword>
<keyword id="KW-0150">Chloroplast</keyword>
<keyword id="KW-0375">Hydrogen ion transport</keyword>
<keyword id="KW-0406">Ion transport</keyword>
<keyword id="KW-0472">Membrane</keyword>
<keyword id="KW-0547">Nucleotide-binding</keyword>
<keyword id="KW-0934">Plastid</keyword>
<keyword id="KW-1185">Reference proteome</keyword>
<keyword id="KW-0691">RNA editing</keyword>
<keyword id="KW-0793">Thylakoid</keyword>
<keyword id="KW-0812">Transmembrane</keyword>
<keyword id="KW-1133">Transmembrane helix</keyword>
<keyword id="KW-0813">Transport</keyword>
<sequence>MKNVTDSFVSLGHWPSAGSFGFNTDILATNLINLSVVLGVLIFFGKGVLSDLLDNRKQRILNTIRNSEELRGGAIEQLEKARSRLRKVESEAEQFRVNGYSEIEREKLNLINSTYKTLEQLENYKNETIQFEQQRAINQVRQRVFQQALRGALGTLNSCLNNELHLRTISANIGMLGTMKEITD</sequence>
<comment type="function">
    <text evidence="1">F(1)F(0) ATP synthase produces ATP from ADP in the presence of a proton or sodium gradient. F-type ATPases consist of two structural domains, F(1) containing the extramembraneous catalytic core and F(0) containing the membrane proton channel, linked together by a central stalk and a peripheral stalk. During catalysis, ATP synthesis in the catalytic domain of F(1) is coupled via a rotary mechanism of the central stalk subunits to proton translocation.</text>
</comment>
<comment type="function">
    <text evidence="1">Component of the F(0) channel, it forms part of the peripheral stalk, linking F(1) to F(0).</text>
</comment>
<comment type="subunit">
    <text evidence="1">F-type ATPases have 2 components, F(1) - the catalytic core - and F(0) - the membrane proton channel. F(1) has five subunits: alpha(3), beta(3), gamma(1), delta(1), epsilon(1). F(0) has four main subunits: a(1), b(1), b'(1) and c(10-14). The alpha and beta chains form an alternating ring which encloses part of the gamma chain. F(1) is attached to F(0) by a central stalk formed by the gamma and epsilon chains, while a peripheral stalk is formed by the delta, b and b' chains.</text>
</comment>
<comment type="subcellular location">
    <subcellularLocation>
        <location evidence="1">Plastid</location>
        <location evidence="1">Chloroplast thylakoid membrane</location>
        <topology evidence="1">Single-pass membrane protein</topology>
    </subcellularLocation>
</comment>
<comment type="RNA editing">
    <location>
        <position position="31" evidence="2"/>
    </location>
</comment>
<comment type="miscellaneous">
    <text>In plastids the F-type ATPase is also known as CF(1)CF(0).</text>
</comment>
<comment type="similarity">
    <text evidence="1">Belongs to the ATPase B chain family.</text>
</comment>
<evidence type="ECO:0000255" key="1">
    <source>
        <dbReference type="HAMAP-Rule" id="MF_01398"/>
    </source>
</evidence>
<evidence type="ECO:0000269" key="2">
    <source>
    </source>
</evidence>
<dbReference type="EMBL" id="Z00044">
    <property type="protein sequence ID" value="CAA77342.2"/>
    <property type="status" value="ALT_SEQ"/>
    <property type="molecule type" value="Genomic_DNA"/>
</dbReference>
<dbReference type="PIR" id="A01060">
    <property type="entry name" value="LWNT1"/>
</dbReference>
<dbReference type="RefSeq" id="NP_054482.2">
    <property type="nucleotide sequence ID" value="NC_001879.2"/>
</dbReference>
<dbReference type="SMR" id="P06290"/>
<dbReference type="GeneID" id="800473"/>
<dbReference type="KEGG" id="nta:800473"/>
<dbReference type="OrthoDB" id="1900203at2759"/>
<dbReference type="Proteomes" id="UP000084051">
    <property type="component" value="Unplaced"/>
</dbReference>
<dbReference type="GO" id="GO:0009535">
    <property type="term" value="C:chloroplast thylakoid membrane"/>
    <property type="evidence" value="ECO:0007669"/>
    <property type="project" value="UniProtKB-SubCell"/>
</dbReference>
<dbReference type="GO" id="GO:0045259">
    <property type="term" value="C:proton-transporting ATP synthase complex"/>
    <property type="evidence" value="ECO:0007669"/>
    <property type="project" value="UniProtKB-KW"/>
</dbReference>
<dbReference type="GO" id="GO:0005524">
    <property type="term" value="F:ATP binding"/>
    <property type="evidence" value="ECO:0007669"/>
    <property type="project" value="UniProtKB-KW"/>
</dbReference>
<dbReference type="GO" id="GO:0046933">
    <property type="term" value="F:proton-transporting ATP synthase activity, rotational mechanism"/>
    <property type="evidence" value="ECO:0007669"/>
    <property type="project" value="UniProtKB-UniRule"/>
</dbReference>
<dbReference type="CDD" id="cd06503">
    <property type="entry name" value="ATP-synt_Fo_b"/>
    <property type="match status" value="1"/>
</dbReference>
<dbReference type="HAMAP" id="MF_01398">
    <property type="entry name" value="ATP_synth_b_bprime"/>
    <property type="match status" value="1"/>
</dbReference>
<dbReference type="InterPro" id="IPR002146">
    <property type="entry name" value="ATP_synth_b/b'su_bac/chlpt"/>
</dbReference>
<dbReference type="PANTHER" id="PTHR34264">
    <property type="entry name" value="ATP SYNTHASE SUBUNIT B, CHLOROPLASTIC"/>
    <property type="match status" value="1"/>
</dbReference>
<dbReference type="PANTHER" id="PTHR34264:SF3">
    <property type="entry name" value="ATP SYNTHASE SUBUNIT B, CHLOROPLASTIC"/>
    <property type="match status" value="1"/>
</dbReference>
<dbReference type="Pfam" id="PF00430">
    <property type="entry name" value="ATP-synt_B"/>
    <property type="match status" value="1"/>
</dbReference>
<protein>
    <recommendedName>
        <fullName evidence="1">ATP synthase subunit b, chloroplastic</fullName>
    </recommendedName>
    <alternativeName>
        <fullName evidence="1">ATP synthase F(0) sector subunit b</fullName>
    </alternativeName>
    <alternativeName>
        <fullName evidence="1">ATPase subunit I</fullName>
    </alternativeName>
</protein>
<geneLocation type="chloroplast"/>
<organism>
    <name type="scientific">Nicotiana tabacum</name>
    <name type="common">Common tobacco</name>
    <dbReference type="NCBI Taxonomy" id="4097"/>
    <lineage>
        <taxon>Eukaryota</taxon>
        <taxon>Viridiplantae</taxon>
        <taxon>Streptophyta</taxon>
        <taxon>Embryophyta</taxon>
        <taxon>Tracheophyta</taxon>
        <taxon>Spermatophyta</taxon>
        <taxon>Magnoliopsida</taxon>
        <taxon>eudicotyledons</taxon>
        <taxon>Gunneridae</taxon>
        <taxon>Pentapetalae</taxon>
        <taxon>asterids</taxon>
        <taxon>lamiids</taxon>
        <taxon>Solanales</taxon>
        <taxon>Solanaceae</taxon>
        <taxon>Nicotianoideae</taxon>
        <taxon>Nicotianeae</taxon>
        <taxon>Nicotiana</taxon>
    </lineage>
</organism>
<reference key="1">
    <citation type="journal article" date="1986" name="EMBO J.">
        <title>The complete nucleotide sequence of the tobacco chloroplast genome: its gene organization and expression.</title>
        <authorList>
            <person name="Shinozaki K."/>
            <person name="Ohme M."/>
            <person name="Tanaka M."/>
            <person name="Wakasugi T."/>
            <person name="Hayashida N."/>
            <person name="Matsubayashi T."/>
            <person name="Zaita N."/>
            <person name="Chunwongse J."/>
            <person name="Obokata J."/>
            <person name="Yamaguchi-Shinozaki K."/>
            <person name="Ohto C."/>
            <person name="Torazawa K."/>
            <person name="Meng B.-Y."/>
            <person name="Sugita M."/>
            <person name="Deno H."/>
            <person name="Kamogashira T."/>
            <person name="Yamada K."/>
            <person name="Kusuda J."/>
            <person name="Takaiwa F."/>
            <person name="Kato A."/>
            <person name="Tohdoh N."/>
            <person name="Shimada H."/>
            <person name="Sugiura M."/>
        </authorList>
    </citation>
    <scope>NUCLEOTIDE SEQUENCE [LARGE SCALE GENOMIC DNA]</scope>
    <source>
        <strain>cv. Bright Yellow 4</strain>
    </source>
</reference>
<reference key="2">
    <citation type="submission" date="2005-09" db="EMBL/GenBank/DDBJ databases">
        <authorList>
            <person name="Yukawa M."/>
        </authorList>
    </citation>
    <scope>SEQUENCE REVISION</scope>
</reference>
<reference key="3">
    <citation type="journal article" date="1996" name="Plant Mol. Biol.">
        <title>Occurrence of silent RNA editing in chloroplasts: its species specificity and the influence of environmental and developmental conditions.</title>
        <authorList>
            <person name="Hirose T."/>
            <person name="Fan H."/>
            <person name="Suzuki J.Y."/>
            <person name="Wakasugi T."/>
            <person name="Tsudzuki T."/>
            <person name="Kossel H."/>
            <person name="Sugiura M."/>
        </authorList>
    </citation>
    <scope>RNA EDITING</scope>
</reference>
<proteinExistence type="evidence at transcript level"/>
<gene>
    <name evidence="1" type="primary">atpF</name>
</gene>
<name>ATPF_TOBAC</name>
<feature type="chain" id="PRO_0000082424" description="ATP synthase subunit b, chloroplastic">
    <location>
        <begin position="1"/>
        <end position="184"/>
    </location>
</feature>
<feature type="transmembrane region" description="Helical" evidence="1">
    <location>
        <begin position="27"/>
        <end position="49"/>
    </location>
</feature>